<evidence type="ECO:0000250" key="1"/>
<evidence type="ECO:0000250" key="2">
    <source>
        <dbReference type="UniProtKB" id="P25641"/>
    </source>
</evidence>
<evidence type="ECO:0000255" key="3"/>
<evidence type="ECO:0000255" key="4">
    <source>
        <dbReference type="PROSITE-ProRule" id="PRU10037"/>
    </source>
</evidence>
<evidence type="ECO:0000256" key="5">
    <source>
        <dbReference type="SAM" id="MobiDB-lite"/>
    </source>
</evidence>
<evidence type="ECO:0000305" key="6"/>
<keyword id="KW-0072">Autophagy</keyword>
<keyword id="KW-0967">Endosome</keyword>
<keyword id="KW-0325">Glycoprotein</keyword>
<keyword id="KW-0378">Hydrolase</keyword>
<keyword id="KW-0442">Lipid degradation</keyword>
<keyword id="KW-0443">Lipid metabolism</keyword>
<keyword id="KW-0472">Membrane</keyword>
<keyword id="KW-0735">Signal-anchor</keyword>
<keyword id="KW-0812">Transmembrane</keyword>
<keyword id="KW-1133">Transmembrane helix</keyword>
<feature type="chain" id="PRO_0000410136" description="Putative lipase ATG15">
    <location>
        <begin position="1"/>
        <end position="519"/>
    </location>
</feature>
<feature type="topological domain" description="Cytoplasmic" evidence="1">
    <location>
        <begin position="1"/>
        <end position="5"/>
    </location>
</feature>
<feature type="transmembrane region" description="Helical; Signal-anchor for type II membrane protein">
    <location>
        <begin position="6"/>
        <end position="26"/>
    </location>
</feature>
<feature type="topological domain" description="Lumenal" evidence="1">
    <location>
        <begin position="27"/>
        <end position="519"/>
    </location>
</feature>
<feature type="region of interest" description="Disordered" evidence="5">
    <location>
        <begin position="481"/>
        <end position="502"/>
    </location>
</feature>
<feature type="active site" description="Charge relay system" evidence="4">
    <location>
        <position position="318"/>
    </location>
</feature>
<feature type="glycosylation site" description="N-linked (GlcNAc...) asparagine" evidence="3">
    <location>
        <position position="48"/>
    </location>
</feature>
<feature type="glycosylation site" description="N-linked (GlcNAc...) asparagine" evidence="3">
    <location>
        <position position="133"/>
    </location>
</feature>
<feature type="glycosylation site" description="N-linked (GlcNAc...) asparagine" evidence="3">
    <location>
        <position position="196"/>
    </location>
</feature>
<feature type="glycosylation site" description="N-linked (GlcNAc...) asparagine" evidence="3">
    <location>
        <position position="220"/>
    </location>
</feature>
<feature type="glycosylation site" description="N-linked (GlcNAc...) asparagine" evidence="3">
    <location>
        <position position="302"/>
    </location>
</feature>
<feature type="glycosylation site" description="N-linked (GlcNAc...) asparagine" evidence="3">
    <location>
        <position position="309"/>
    </location>
</feature>
<feature type="glycosylation site" description="N-linked (GlcNAc...) asparagine" evidence="3">
    <location>
        <position position="361"/>
    </location>
</feature>
<gene>
    <name type="primary">ATG15</name>
    <name type="ordered locus">CNBC6140</name>
</gene>
<sequence>MYIPGPLRLSSYLLPFLSSPSPPAQSSPDTRTISFKPVHAHGHAFVDNASTPTLLFLDQSPSASLYAHDYPIGAFGDDYMLPRLTSDVLEIRTRKKLIRRPKVRPPRIISWAQSYRAQALHFNGINNNNDNSNKSISLPESWLAPDLANPSDEWSDVEVTVPDLTDRQTVITLAKMSSNAYVTPGGAGWYTLNDWNASMPFGWEPDADGLRGHVFADEKNETVIISIKGTSAGVLGSGGPTAKNDKFNDNLLFSCCCARVDFSWTPVCDCYAGGYKCGQTCLEDALVSESVYATVGTNLYNNITYMYPNATIWLTGHSLGGAVSSLIGLSFGAPAVTYESPGELLPASRLHLPLPPGMPANLSGITHVYHTADPIAMGVCNGPYSSCYAAGFAMESKCHTGETILYDTVRVKGWSVDVRTHRIEEVIDKVLADPWPEEEEGKSGVWEKAVEGWYRAADRVRAALDESVVRDDVNVWWGWGRRGPKRQPGGEDPKHGGVPKPVSEEDCVDCYKWEFGEWN</sequence>
<protein>
    <recommendedName>
        <fullName>Putative lipase ATG15</fullName>
        <ecNumber>3.1.1.3</ecNumber>
    </recommendedName>
    <alternativeName>
        <fullName>Autophagy-related protein 15</fullName>
    </alternativeName>
</protein>
<dbReference type="EC" id="3.1.1.3"/>
<dbReference type="EMBL" id="AAEY01000017">
    <property type="protein sequence ID" value="EAL21576.1"/>
    <property type="molecule type" value="Genomic_DNA"/>
</dbReference>
<dbReference type="RefSeq" id="XP_776223.1">
    <property type="nucleotide sequence ID" value="XM_771130.1"/>
</dbReference>
<dbReference type="ESTHER" id="cryne-q5kl13">
    <property type="family name" value="ATG15-related-lipase"/>
</dbReference>
<dbReference type="GlyCosmos" id="P0CO61">
    <property type="glycosylation" value="7 sites, No reported glycans"/>
</dbReference>
<dbReference type="GeneID" id="4935280"/>
<dbReference type="KEGG" id="cnb:CNBC6140"/>
<dbReference type="VEuPathDB" id="FungiDB:CNBC6140"/>
<dbReference type="HOGENOM" id="CLU_028295_1_1_1"/>
<dbReference type="OrthoDB" id="2043at5206"/>
<dbReference type="GO" id="GO:0005783">
    <property type="term" value="C:endoplasmic reticulum"/>
    <property type="evidence" value="ECO:0007669"/>
    <property type="project" value="EnsemblFungi"/>
</dbReference>
<dbReference type="GO" id="GO:0032585">
    <property type="term" value="C:multivesicular body membrane"/>
    <property type="evidence" value="ECO:0007669"/>
    <property type="project" value="UniProtKB-SubCell"/>
</dbReference>
<dbReference type="GO" id="GO:0005775">
    <property type="term" value="C:vacuolar lumen"/>
    <property type="evidence" value="ECO:0007669"/>
    <property type="project" value="EnsemblFungi"/>
</dbReference>
<dbReference type="GO" id="GO:0005774">
    <property type="term" value="C:vacuolar membrane"/>
    <property type="evidence" value="ECO:0007669"/>
    <property type="project" value="EnsemblFungi"/>
</dbReference>
<dbReference type="GO" id="GO:0004620">
    <property type="term" value="F:phospholipase activity"/>
    <property type="evidence" value="ECO:0007669"/>
    <property type="project" value="EnsemblFungi"/>
</dbReference>
<dbReference type="GO" id="GO:0004806">
    <property type="term" value="F:triacylglycerol lipase activity"/>
    <property type="evidence" value="ECO:0007669"/>
    <property type="project" value="UniProtKB-EC"/>
</dbReference>
<dbReference type="GO" id="GO:0034496">
    <property type="term" value="P:multivesicular body membrane disassembly"/>
    <property type="evidence" value="ECO:0007669"/>
    <property type="project" value="EnsemblFungi"/>
</dbReference>
<dbReference type="GO" id="GO:0046461">
    <property type="term" value="P:neutral lipid catabolic process"/>
    <property type="evidence" value="ECO:0007669"/>
    <property type="project" value="EnsemblFungi"/>
</dbReference>
<dbReference type="GO" id="GO:0000425">
    <property type="term" value="P:pexophagy"/>
    <property type="evidence" value="ECO:0007669"/>
    <property type="project" value="EnsemblFungi"/>
</dbReference>
<dbReference type="GO" id="GO:0006660">
    <property type="term" value="P:phosphatidylserine catabolic process"/>
    <property type="evidence" value="ECO:0007669"/>
    <property type="project" value="EnsemblFungi"/>
</dbReference>
<dbReference type="GO" id="GO:0034727">
    <property type="term" value="P:piecemeal microautophagy of the nucleus"/>
    <property type="evidence" value="ECO:0007669"/>
    <property type="project" value="EnsemblFungi"/>
</dbReference>
<dbReference type="GO" id="GO:0006624">
    <property type="term" value="P:vacuolar protein processing"/>
    <property type="evidence" value="ECO:0007669"/>
    <property type="project" value="EnsemblFungi"/>
</dbReference>
<dbReference type="CDD" id="cd00519">
    <property type="entry name" value="Lipase_3"/>
    <property type="match status" value="1"/>
</dbReference>
<dbReference type="FunFam" id="3.40.50.1820:FF:000129">
    <property type="entry name" value="Autophagy related lipase Atg15, putative"/>
    <property type="match status" value="1"/>
</dbReference>
<dbReference type="Gene3D" id="3.40.50.1820">
    <property type="entry name" value="alpha/beta hydrolase"/>
    <property type="match status" value="1"/>
</dbReference>
<dbReference type="InterPro" id="IPR029058">
    <property type="entry name" value="AB_hydrolase_fold"/>
</dbReference>
<dbReference type="InterPro" id="IPR050805">
    <property type="entry name" value="ATG15_Lipase"/>
</dbReference>
<dbReference type="InterPro" id="IPR002921">
    <property type="entry name" value="Fungal_lipase-type"/>
</dbReference>
<dbReference type="PANTHER" id="PTHR47175">
    <property type="entry name" value="LIPASE ATG15-RELATED"/>
    <property type="match status" value="1"/>
</dbReference>
<dbReference type="PANTHER" id="PTHR47175:SF2">
    <property type="entry name" value="LIPASE ATG15-RELATED"/>
    <property type="match status" value="1"/>
</dbReference>
<dbReference type="Pfam" id="PF01764">
    <property type="entry name" value="Lipase_3"/>
    <property type="match status" value="1"/>
</dbReference>
<dbReference type="SUPFAM" id="SSF53474">
    <property type="entry name" value="alpha/beta-Hydrolases"/>
    <property type="match status" value="1"/>
</dbReference>
<dbReference type="PROSITE" id="PS00120">
    <property type="entry name" value="LIPASE_SER"/>
    <property type="match status" value="1"/>
</dbReference>
<reference key="1">
    <citation type="journal article" date="2005" name="Science">
        <title>The genome of the basidiomycetous yeast and human pathogen Cryptococcus neoformans.</title>
        <authorList>
            <person name="Loftus B.J."/>
            <person name="Fung E."/>
            <person name="Roncaglia P."/>
            <person name="Rowley D."/>
            <person name="Amedeo P."/>
            <person name="Bruno D."/>
            <person name="Vamathevan J."/>
            <person name="Miranda M."/>
            <person name="Anderson I.J."/>
            <person name="Fraser J.A."/>
            <person name="Allen J.E."/>
            <person name="Bosdet I.E."/>
            <person name="Brent M.R."/>
            <person name="Chiu R."/>
            <person name="Doering T.L."/>
            <person name="Donlin M.J."/>
            <person name="D'Souza C.A."/>
            <person name="Fox D.S."/>
            <person name="Grinberg V."/>
            <person name="Fu J."/>
            <person name="Fukushima M."/>
            <person name="Haas B.J."/>
            <person name="Huang J.C."/>
            <person name="Janbon G."/>
            <person name="Jones S.J.M."/>
            <person name="Koo H.L."/>
            <person name="Krzywinski M.I."/>
            <person name="Kwon-Chung K.J."/>
            <person name="Lengeler K.B."/>
            <person name="Maiti R."/>
            <person name="Marra M.A."/>
            <person name="Marra R.E."/>
            <person name="Mathewson C.A."/>
            <person name="Mitchell T.G."/>
            <person name="Pertea M."/>
            <person name="Riggs F.R."/>
            <person name="Salzberg S.L."/>
            <person name="Schein J.E."/>
            <person name="Shvartsbeyn A."/>
            <person name="Shin H."/>
            <person name="Shumway M."/>
            <person name="Specht C.A."/>
            <person name="Suh B.B."/>
            <person name="Tenney A."/>
            <person name="Utterback T.R."/>
            <person name="Wickes B.L."/>
            <person name="Wortman J.R."/>
            <person name="Wye N.H."/>
            <person name="Kronstad J.W."/>
            <person name="Lodge J.K."/>
            <person name="Heitman J."/>
            <person name="Davis R.W."/>
            <person name="Fraser C.M."/>
            <person name="Hyman R.W."/>
        </authorList>
    </citation>
    <scope>NUCLEOTIDE SEQUENCE [LARGE SCALE GENOMIC DNA]</scope>
    <source>
        <strain>B-3501A</strain>
    </source>
</reference>
<name>ATG15_CRYNB</name>
<comment type="function">
    <text evidence="1">Lipase which is essential for lysis of subvacuolar cytoplasm to vacuole targeted bodies and intravacuolar autophagic bodies. Involved in the lysis of intravacuolar multivesicular body (MVB) vesicles. The intravacuolar membrane disintegration by ATG15 is critical to life span extension (By similarity).</text>
</comment>
<comment type="catalytic activity">
    <reaction>
        <text>a triacylglycerol + H2O = a diacylglycerol + a fatty acid + H(+)</text>
        <dbReference type="Rhea" id="RHEA:12044"/>
        <dbReference type="ChEBI" id="CHEBI:15377"/>
        <dbReference type="ChEBI" id="CHEBI:15378"/>
        <dbReference type="ChEBI" id="CHEBI:17855"/>
        <dbReference type="ChEBI" id="CHEBI:18035"/>
        <dbReference type="ChEBI" id="CHEBI:28868"/>
        <dbReference type="EC" id="3.1.1.3"/>
    </reaction>
</comment>
<comment type="subunit">
    <text evidence="1">Binds to both phosphatidylinositol (PI) and phosphatidylinositol 3,5-bisphosphate (PIP2).</text>
</comment>
<comment type="subcellular location">
    <subcellularLocation>
        <location evidence="2">Endosome</location>
        <location evidence="2">Multivesicular body membrane</location>
        <topology evidence="2">Single-pass type II membrane protein</topology>
    </subcellularLocation>
    <subcellularLocation>
        <location evidence="2">Prevacuolar compartment membrane</location>
        <topology evidence="2">Single-pass type II membrane protein</topology>
    </subcellularLocation>
    <text evidence="2">From ER, targeted to vacuolar lumen at the MVB vesicles via the Golgi and the prevacuolar compartment (PVC).</text>
</comment>
<comment type="similarity">
    <text evidence="6">Belongs to the AB hydrolase superfamily. Lipase family.</text>
</comment>
<proteinExistence type="inferred from homology"/>
<accession>P0CO61</accession>
<accession>Q55V69</accession>
<accession>Q5KL13</accession>
<organism>
    <name type="scientific">Cryptococcus neoformans var. neoformans serotype D (strain B-3501A)</name>
    <name type="common">Filobasidiella neoformans</name>
    <dbReference type="NCBI Taxonomy" id="283643"/>
    <lineage>
        <taxon>Eukaryota</taxon>
        <taxon>Fungi</taxon>
        <taxon>Dikarya</taxon>
        <taxon>Basidiomycota</taxon>
        <taxon>Agaricomycotina</taxon>
        <taxon>Tremellomycetes</taxon>
        <taxon>Tremellales</taxon>
        <taxon>Cryptococcaceae</taxon>
        <taxon>Cryptococcus</taxon>
        <taxon>Cryptococcus neoformans species complex</taxon>
    </lineage>
</organism>